<comment type="function">
    <text evidence="1">Catalyzes amidations at positions B, D, E, and G on adenosylcobyrinic A,C-diamide. NH(2) groups are provided by glutamine, and one molecule of ATP is hydrogenolyzed for each amidation.</text>
</comment>
<comment type="pathway">
    <text evidence="1">Cofactor biosynthesis; adenosylcobalamin biosynthesis.</text>
</comment>
<comment type="similarity">
    <text evidence="1">Belongs to the CobB/CobQ family. CobQ subfamily.</text>
</comment>
<dbReference type="EMBL" id="CP000394">
    <property type="protein sequence ID" value="ABI61552.1"/>
    <property type="molecule type" value="Genomic_DNA"/>
</dbReference>
<dbReference type="RefSeq" id="WP_011631361.1">
    <property type="nucleotide sequence ID" value="NC_008343.2"/>
</dbReference>
<dbReference type="SMR" id="Q0BUF0"/>
<dbReference type="STRING" id="391165.GbCGDNIH1_0654"/>
<dbReference type="KEGG" id="gbe:GbCGDNIH1_0654"/>
<dbReference type="eggNOG" id="COG1492">
    <property type="taxonomic scope" value="Bacteria"/>
</dbReference>
<dbReference type="HOGENOM" id="CLU_019250_2_2_5"/>
<dbReference type="OrthoDB" id="9808302at2"/>
<dbReference type="UniPathway" id="UPA00148"/>
<dbReference type="Proteomes" id="UP000001963">
    <property type="component" value="Chromosome"/>
</dbReference>
<dbReference type="GO" id="GO:0015420">
    <property type="term" value="F:ABC-type vitamin B12 transporter activity"/>
    <property type="evidence" value="ECO:0007669"/>
    <property type="project" value="UniProtKB-UniRule"/>
</dbReference>
<dbReference type="GO" id="GO:0003824">
    <property type="term" value="F:catalytic activity"/>
    <property type="evidence" value="ECO:0007669"/>
    <property type="project" value="InterPro"/>
</dbReference>
<dbReference type="GO" id="GO:0009236">
    <property type="term" value="P:cobalamin biosynthetic process"/>
    <property type="evidence" value="ECO:0007669"/>
    <property type="project" value="UniProtKB-UniRule"/>
</dbReference>
<dbReference type="CDD" id="cd05389">
    <property type="entry name" value="CobQ_N"/>
    <property type="match status" value="1"/>
</dbReference>
<dbReference type="CDD" id="cd01750">
    <property type="entry name" value="GATase1_CobQ"/>
    <property type="match status" value="1"/>
</dbReference>
<dbReference type="Gene3D" id="3.40.50.880">
    <property type="match status" value="1"/>
</dbReference>
<dbReference type="Gene3D" id="3.40.50.300">
    <property type="entry name" value="P-loop containing nucleotide triphosphate hydrolases"/>
    <property type="match status" value="1"/>
</dbReference>
<dbReference type="HAMAP" id="MF_00028">
    <property type="entry name" value="CobQ"/>
    <property type="match status" value="1"/>
</dbReference>
<dbReference type="InterPro" id="IPR029062">
    <property type="entry name" value="Class_I_gatase-like"/>
</dbReference>
<dbReference type="InterPro" id="IPR002586">
    <property type="entry name" value="CobQ/CobB/MinD/ParA_Nub-bd_dom"/>
</dbReference>
<dbReference type="InterPro" id="IPR033949">
    <property type="entry name" value="CobQ_GATase1"/>
</dbReference>
<dbReference type="InterPro" id="IPR047045">
    <property type="entry name" value="CobQ_N"/>
</dbReference>
<dbReference type="InterPro" id="IPR004459">
    <property type="entry name" value="CobQ_synth"/>
</dbReference>
<dbReference type="InterPro" id="IPR011698">
    <property type="entry name" value="GATase_3"/>
</dbReference>
<dbReference type="InterPro" id="IPR027417">
    <property type="entry name" value="P-loop_NTPase"/>
</dbReference>
<dbReference type="NCBIfam" id="TIGR00313">
    <property type="entry name" value="cobQ"/>
    <property type="match status" value="1"/>
</dbReference>
<dbReference type="NCBIfam" id="NF001989">
    <property type="entry name" value="PRK00784.1"/>
    <property type="match status" value="1"/>
</dbReference>
<dbReference type="PANTHER" id="PTHR21343:SF1">
    <property type="entry name" value="COBYRIC ACID SYNTHASE"/>
    <property type="match status" value="1"/>
</dbReference>
<dbReference type="PANTHER" id="PTHR21343">
    <property type="entry name" value="DETHIOBIOTIN SYNTHETASE"/>
    <property type="match status" value="1"/>
</dbReference>
<dbReference type="Pfam" id="PF01656">
    <property type="entry name" value="CbiA"/>
    <property type="match status" value="1"/>
</dbReference>
<dbReference type="Pfam" id="PF07685">
    <property type="entry name" value="GATase_3"/>
    <property type="match status" value="1"/>
</dbReference>
<dbReference type="SUPFAM" id="SSF52317">
    <property type="entry name" value="Class I glutamine amidotransferase-like"/>
    <property type="match status" value="1"/>
</dbReference>
<dbReference type="SUPFAM" id="SSF52540">
    <property type="entry name" value="P-loop containing nucleoside triphosphate hydrolases"/>
    <property type="match status" value="1"/>
</dbReference>
<dbReference type="PROSITE" id="PS51274">
    <property type="entry name" value="GATASE_COBBQ"/>
    <property type="match status" value="1"/>
</dbReference>
<gene>
    <name evidence="1" type="primary">cobQ</name>
    <name type="ordered locus">GbCGDNIH1_0654</name>
</gene>
<organism>
    <name type="scientific">Granulibacter bethesdensis (strain ATCC BAA-1260 / CGDNIH1)</name>
    <dbReference type="NCBI Taxonomy" id="391165"/>
    <lineage>
        <taxon>Bacteria</taxon>
        <taxon>Pseudomonadati</taxon>
        <taxon>Pseudomonadota</taxon>
        <taxon>Alphaproteobacteria</taxon>
        <taxon>Acetobacterales</taxon>
        <taxon>Acetobacteraceae</taxon>
        <taxon>Granulibacter</taxon>
    </lineage>
</organism>
<feature type="chain" id="PRO_0000332339" description="Cobyric acid synthase">
    <location>
        <begin position="1"/>
        <end position="481"/>
    </location>
</feature>
<feature type="domain" description="GATase cobBQ-type" evidence="1">
    <location>
        <begin position="248"/>
        <end position="435"/>
    </location>
</feature>
<feature type="active site" description="Nucleophile" evidence="1">
    <location>
        <position position="329"/>
    </location>
</feature>
<feature type="active site" evidence="1">
    <location>
        <position position="427"/>
    </location>
</feature>
<keyword id="KW-0169">Cobalamin biosynthesis</keyword>
<keyword id="KW-0315">Glutamine amidotransferase</keyword>
<keyword id="KW-1185">Reference proteome</keyword>
<name>COBQ_GRABC</name>
<accession>Q0BUF0</accession>
<evidence type="ECO:0000255" key="1">
    <source>
        <dbReference type="HAMAP-Rule" id="MF_00028"/>
    </source>
</evidence>
<protein>
    <recommendedName>
        <fullName evidence="1">Cobyric acid synthase</fullName>
    </recommendedName>
</protein>
<sequence>MIQGTGSSVGKSLLVAGVSRALTRRGLVVRPFKPQNMSNNAAIAADGGEIGRAQALQARACRISPSHHMNPVLLKPQSEIGAQIVVQGKVHGQATARAYQAMKPQLLGTVLESFGILRKQADIVLVEGAGSASEINLRAGDIANMGFARAANVPVVIAGDIDRGGVIAALVGTKTVLDPDDAAMVRGFLVNRMRGDPSLFAEGMRLIEQQTGWEALGLVPHCEAARALPAEDAADLLRGLSAPTRSGNTVIAVPMLPHIANFDDLDPLAAEDSVTLVMVPPGQPLPVADAIIIPGSKTVIADLAALRHHGWDIDILAHRRRGRSIIGLCGGYQMLGRAIHDPQGFEGPAGSAAGLGLLEIETVLEPHKILTSRSGHLFNHDVPVSGYEMHMGITTGSGLRRPLLSLGPDAPEGCVSADGVVMGTYLHGLFHGGAFRRHLLATLDVSSHGGDHEDAVEHALDALADHMEAHVAIDRLLALSA</sequence>
<reference key="1">
    <citation type="journal article" date="2007" name="J. Bacteriol.">
        <title>Genome sequence analysis of the emerging human pathogenic acetic acid bacterium Granulibacter bethesdensis.</title>
        <authorList>
            <person name="Greenberg D.E."/>
            <person name="Porcella S.F."/>
            <person name="Zelazny A.M."/>
            <person name="Virtaneva K."/>
            <person name="Sturdevant D.E."/>
            <person name="Kupko J.J. III"/>
            <person name="Barbian K.D."/>
            <person name="Babar A."/>
            <person name="Dorward D.W."/>
            <person name="Holland S.M."/>
        </authorList>
    </citation>
    <scope>NUCLEOTIDE SEQUENCE [LARGE SCALE GENOMIC DNA]</scope>
    <source>
        <strain>ATCC BAA-1260 / CGDNIH1</strain>
    </source>
</reference>
<proteinExistence type="inferred from homology"/>